<gene>
    <name type="primary">FSTL1</name>
</gene>
<name>FSTL1_PONAB</name>
<feature type="signal peptide" evidence="2">
    <location>
        <begin position="1"/>
        <end position="18"/>
    </location>
</feature>
<feature type="chain" id="PRO_0000329283" description="Follistatin-related protein 1">
    <location>
        <begin position="19"/>
        <end position="306"/>
    </location>
</feature>
<feature type="domain" description="Follistatin-like">
    <location>
        <begin position="28"/>
        <end position="51"/>
    </location>
</feature>
<feature type="domain" description="Kazal-like" evidence="7">
    <location>
        <begin position="46"/>
        <end position="98"/>
    </location>
</feature>
<feature type="domain" description="EF-hand 1" evidence="6">
    <location>
        <begin position="142"/>
        <end position="176"/>
    </location>
</feature>
<feature type="domain" description="EF-hand 2" evidence="6">
    <location>
        <begin position="191"/>
        <end position="226"/>
    </location>
</feature>
<feature type="domain" description="VWFC">
    <location>
        <begin position="231"/>
        <end position="285"/>
    </location>
</feature>
<feature type="modified residue" description="Phosphoserine" evidence="2">
    <location>
        <position position="163"/>
    </location>
</feature>
<feature type="glycosylation site" description="N-linked (GlcNAc...) asparagine" evidence="5">
    <location>
        <position position="142"/>
    </location>
</feature>
<feature type="glycosylation site" description="N-linked (GlcNAc...) asparagine" evidence="5">
    <location>
        <position position="173"/>
    </location>
</feature>
<feature type="glycosylation site" description="N-linked (GlcNAc...) asparagine" evidence="5">
    <location>
        <position position="178"/>
    </location>
</feature>
<feature type="disulfide bond" evidence="3">
    <location>
        <begin position="29"/>
        <end position="40"/>
    </location>
</feature>
<feature type="disulfide bond" evidence="3">
    <location>
        <begin position="34"/>
        <end position="50"/>
    </location>
</feature>
<feature type="disulfide bond" evidence="7">
    <location>
        <begin position="52"/>
        <end position="82"/>
    </location>
</feature>
<feature type="disulfide bond" evidence="7">
    <location>
        <begin position="56"/>
        <end position="75"/>
    </location>
</feature>
<feature type="disulfide bond" evidence="7">
    <location>
        <begin position="64"/>
        <end position="96"/>
    </location>
</feature>
<reference key="1">
    <citation type="submission" date="2004-11" db="EMBL/GenBank/DDBJ databases">
        <authorList>
            <consortium name="The German cDNA consortium"/>
        </authorList>
    </citation>
    <scope>NUCLEOTIDE SEQUENCE [LARGE SCALE MRNA]</scope>
    <source>
        <tissue>Kidney</tissue>
    </source>
</reference>
<keyword id="KW-1015">Disulfide bond</keyword>
<keyword id="KW-0325">Glycoprotein</keyword>
<keyword id="KW-0358">Heparin-binding</keyword>
<keyword id="KW-0597">Phosphoprotein</keyword>
<keyword id="KW-1185">Reference proteome</keyword>
<keyword id="KW-0677">Repeat</keyword>
<keyword id="KW-0964">Secreted</keyword>
<keyword id="KW-0732">Signal</keyword>
<dbReference type="EMBL" id="CR859249">
    <property type="protein sequence ID" value="CAH91429.1"/>
    <property type="status" value="ALT_INIT"/>
    <property type="molecule type" value="mRNA"/>
</dbReference>
<dbReference type="RefSeq" id="NP_001125838.1">
    <property type="nucleotide sequence ID" value="NM_001132366.1"/>
</dbReference>
<dbReference type="SMR" id="Q5R9Y1"/>
<dbReference type="FunCoup" id="Q5R9Y1">
    <property type="interactions" value="786"/>
</dbReference>
<dbReference type="MEROPS" id="I01.967"/>
<dbReference type="GlyCosmos" id="Q5R9Y1">
    <property type="glycosylation" value="3 sites, No reported glycans"/>
</dbReference>
<dbReference type="GeneID" id="100172767"/>
<dbReference type="KEGG" id="pon:100172767"/>
<dbReference type="CTD" id="11167"/>
<dbReference type="eggNOG" id="ENOG502QQAG">
    <property type="taxonomic scope" value="Eukaryota"/>
</dbReference>
<dbReference type="HOGENOM" id="CLU_038229_0_0_1"/>
<dbReference type="InParanoid" id="Q5R9Y1"/>
<dbReference type="OMA" id="CIERCKP"/>
<dbReference type="OrthoDB" id="88467at2759"/>
<dbReference type="TreeFam" id="TF106409"/>
<dbReference type="Proteomes" id="UP000001595">
    <property type="component" value="Unplaced"/>
</dbReference>
<dbReference type="GO" id="GO:0005615">
    <property type="term" value="C:extracellular space"/>
    <property type="evidence" value="ECO:0007669"/>
    <property type="project" value="TreeGrafter"/>
</dbReference>
<dbReference type="GO" id="GO:0005509">
    <property type="term" value="F:calcium ion binding"/>
    <property type="evidence" value="ECO:0007669"/>
    <property type="project" value="InterPro"/>
</dbReference>
<dbReference type="GO" id="GO:0008201">
    <property type="term" value="F:heparin binding"/>
    <property type="evidence" value="ECO:0007669"/>
    <property type="project" value="UniProtKB-KW"/>
</dbReference>
<dbReference type="GO" id="GO:0045446">
    <property type="term" value="P:endothelial cell differentiation"/>
    <property type="evidence" value="ECO:0000250"/>
    <property type="project" value="UniProtKB"/>
</dbReference>
<dbReference type="GO" id="GO:0043542">
    <property type="term" value="P:endothelial cell migration"/>
    <property type="evidence" value="ECO:0000250"/>
    <property type="project" value="UniProtKB"/>
</dbReference>
<dbReference type="GO" id="GO:0043066">
    <property type="term" value="P:negative regulation of apoptotic process"/>
    <property type="evidence" value="ECO:0000250"/>
    <property type="project" value="UniProtKB"/>
</dbReference>
<dbReference type="GO" id="GO:0030510">
    <property type="term" value="P:regulation of BMP signaling pathway"/>
    <property type="evidence" value="ECO:0007669"/>
    <property type="project" value="TreeGrafter"/>
</dbReference>
<dbReference type="CDD" id="cd16233">
    <property type="entry name" value="EFh_SPARC_FSTL1"/>
    <property type="match status" value="1"/>
</dbReference>
<dbReference type="CDD" id="cd00104">
    <property type="entry name" value="KAZAL_FS"/>
    <property type="match status" value="1"/>
</dbReference>
<dbReference type="FunFam" id="3.30.60.30:FF:000017">
    <property type="entry name" value="Follistatin like 1"/>
    <property type="match status" value="1"/>
</dbReference>
<dbReference type="Gene3D" id="3.30.60.30">
    <property type="match status" value="1"/>
</dbReference>
<dbReference type="Gene3D" id="1.10.238.10">
    <property type="entry name" value="EF-hand"/>
    <property type="match status" value="1"/>
</dbReference>
<dbReference type="InterPro" id="IPR011992">
    <property type="entry name" value="EF-hand-dom_pair"/>
</dbReference>
<dbReference type="InterPro" id="IPR057020">
    <property type="entry name" value="EF-hand_FSTL1"/>
</dbReference>
<dbReference type="InterPro" id="IPR002048">
    <property type="entry name" value="EF_hand_dom"/>
</dbReference>
<dbReference type="InterPro" id="IPR003645">
    <property type="entry name" value="Fol_N"/>
</dbReference>
<dbReference type="InterPro" id="IPR015369">
    <property type="entry name" value="Follistatin/Osteonectin_EGF"/>
</dbReference>
<dbReference type="InterPro" id="IPR002350">
    <property type="entry name" value="Kazal_dom"/>
</dbReference>
<dbReference type="InterPro" id="IPR036058">
    <property type="entry name" value="Kazal_dom_sf"/>
</dbReference>
<dbReference type="InterPro" id="IPR050653">
    <property type="entry name" value="Prot_Inhib_GrowthFact_Antg"/>
</dbReference>
<dbReference type="PANTHER" id="PTHR10913">
    <property type="entry name" value="FOLLISTATIN-RELATED"/>
    <property type="match status" value="1"/>
</dbReference>
<dbReference type="PANTHER" id="PTHR10913:SF13">
    <property type="entry name" value="FOLLISTATIN-RELATED PROTEIN 1"/>
    <property type="match status" value="1"/>
</dbReference>
<dbReference type="Pfam" id="PF23564">
    <property type="entry name" value="EF-hand_FSTL1"/>
    <property type="match status" value="1"/>
</dbReference>
<dbReference type="Pfam" id="PF09289">
    <property type="entry name" value="FOLN"/>
    <property type="match status" value="1"/>
</dbReference>
<dbReference type="Pfam" id="PF07648">
    <property type="entry name" value="Kazal_2"/>
    <property type="match status" value="1"/>
</dbReference>
<dbReference type="Pfam" id="PF23244">
    <property type="entry name" value="VWF"/>
    <property type="match status" value="1"/>
</dbReference>
<dbReference type="SMART" id="SM00274">
    <property type="entry name" value="FOLN"/>
    <property type="match status" value="1"/>
</dbReference>
<dbReference type="SMART" id="SM00280">
    <property type="entry name" value="KAZAL"/>
    <property type="match status" value="1"/>
</dbReference>
<dbReference type="SUPFAM" id="SSF47473">
    <property type="entry name" value="EF-hand"/>
    <property type="match status" value="1"/>
</dbReference>
<dbReference type="SUPFAM" id="SSF57603">
    <property type="entry name" value="FnI-like domain"/>
    <property type="match status" value="1"/>
</dbReference>
<dbReference type="SUPFAM" id="SSF100895">
    <property type="entry name" value="Kazal-type serine protease inhibitors"/>
    <property type="match status" value="1"/>
</dbReference>
<dbReference type="PROSITE" id="PS50222">
    <property type="entry name" value="EF_HAND_2"/>
    <property type="match status" value="2"/>
</dbReference>
<dbReference type="PROSITE" id="PS51465">
    <property type="entry name" value="KAZAL_2"/>
    <property type="match status" value="1"/>
</dbReference>
<sequence length="306" mass="34829">MWKRWLALALVAVAWVRAEEELRSKSKICANVFCGAGRECAVTEKGEPTCLCIEQCKPHKRPVCGSNGKTYLNHCELHRDACLTGSKIQVDYDGHCKEKKSVSPSASPVVCYQSNRDELRRRIIQWLEAEIIPDGWFSRGSNYSEILDKYFKNFDNGDSRLDSSEFLKFVEQNETAINITTYPDQENNKLLRGLCVDALIELSDENADWKLSFQEFLKCLNPSFNPPEKKCALEDETYADGAETEVDCNRCVCACGNWVCTAMTCDGKNQKGAQTQTEEEMTRYVQELQKHQETAEKTKRVSTKEI</sequence>
<proteinExistence type="evidence at transcript level"/>
<organism>
    <name type="scientific">Pongo abelii</name>
    <name type="common">Sumatran orangutan</name>
    <name type="synonym">Pongo pygmaeus abelii</name>
    <dbReference type="NCBI Taxonomy" id="9601"/>
    <lineage>
        <taxon>Eukaryota</taxon>
        <taxon>Metazoa</taxon>
        <taxon>Chordata</taxon>
        <taxon>Craniata</taxon>
        <taxon>Vertebrata</taxon>
        <taxon>Euteleostomi</taxon>
        <taxon>Mammalia</taxon>
        <taxon>Eutheria</taxon>
        <taxon>Euarchontoglires</taxon>
        <taxon>Primates</taxon>
        <taxon>Haplorrhini</taxon>
        <taxon>Catarrhini</taxon>
        <taxon>Hominidae</taxon>
        <taxon>Pongo</taxon>
    </lineage>
</organism>
<protein>
    <recommendedName>
        <fullName>Follistatin-related protein 1</fullName>
    </recommendedName>
    <alternativeName>
        <fullName>Follistatin-like protein 1</fullName>
    </alternativeName>
</protein>
<comment type="function">
    <text evidence="2 3">Secreted glycoprotein that is involved in various physiological processes, such as angiogenesis, regulation of the immune response, cell proliferation and differentiation (By similarity). Plays a role in the development of the central nervous system, skeletal system, lungs, and ureter. Promotes endothelial cell survival, migration and differentiation into network structures in an AKT-dependent manner. Also promotes survival of cardiac myocytes (By similarity). Initiates various signaling cascades by activating different receptors on the cell surface such as DIP2A, TLR4 or BMP receptors (By similarity).</text>
</comment>
<comment type="subunit">
    <text evidence="2 3 4">Homodimer (By similarity). Interacts with SCN10A (By similarity). Interacts with DIP2A; DIP2A may act as a cell surface receptor for FSTL1. Interacts with BMP4. Interacts with CD14; this interaction promotes TL4-mediated signaling cascade (By similarity).</text>
</comment>
<comment type="subcellular location">
    <subcellularLocation>
        <location evidence="1">Secreted</location>
    </subcellularLocation>
</comment>
<comment type="sequence caution" evidence="8">
    <conflict type="erroneous initiation">
        <sequence resource="EMBL-CDS" id="CAH91429"/>
    </conflict>
</comment>
<evidence type="ECO:0000250" key="1"/>
<evidence type="ECO:0000250" key="2">
    <source>
        <dbReference type="UniProtKB" id="Q12841"/>
    </source>
</evidence>
<evidence type="ECO:0000250" key="3">
    <source>
        <dbReference type="UniProtKB" id="Q62356"/>
    </source>
</evidence>
<evidence type="ECO:0000250" key="4">
    <source>
        <dbReference type="UniProtKB" id="Q62632"/>
    </source>
</evidence>
<evidence type="ECO:0000255" key="5"/>
<evidence type="ECO:0000255" key="6">
    <source>
        <dbReference type="PROSITE-ProRule" id="PRU00448"/>
    </source>
</evidence>
<evidence type="ECO:0000255" key="7">
    <source>
        <dbReference type="PROSITE-ProRule" id="PRU00798"/>
    </source>
</evidence>
<evidence type="ECO:0000305" key="8"/>
<accession>Q5R9Y1</accession>